<evidence type="ECO:0000250" key="1">
    <source>
        <dbReference type="UniProtKB" id="Q6ZNA4"/>
    </source>
</evidence>
<evidence type="ECO:0000250" key="2">
    <source>
        <dbReference type="UniProtKB" id="Q6ZSG1"/>
    </source>
</evidence>
<evidence type="ECO:0000250" key="3">
    <source>
        <dbReference type="UniProtKB" id="Q99ML9"/>
    </source>
</evidence>
<evidence type="ECO:0000255" key="4">
    <source>
        <dbReference type="PROSITE-ProRule" id="PRU00175"/>
    </source>
</evidence>
<evidence type="ECO:0000256" key="5">
    <source>
        <dbReference type="SAM" id="MobiDB-lite"/>
    </source>
</evidence>
<evidence type="ECO:0000305" key="6"/>
<proteinExistence type="evidence at transcript level"/>
<comment type="function">
    <text evidence="1 3">E3 ubiquitin-protein ligase required for mesoderm patterning during embryonic development (By similarity). Acts as an enhancer of the transcriptional responses of the smad2/smad3 effectors, which are activated downstream of BMP. Acts by mediating ubiquitination and degradation of SMAD inhibitors such as smad7, inducing their proteasomal degradation and thereby enhancing the transcriptional activity of TGF-beta and BMP. Specifically binds polysumoylated chains via SUMO interaction motifs (SIMs) and mediates ubiquitination of sumoylated substrates (By similarity). The regulation of the BMP-SMAD signaling is however independent of sumoylation and is not dependent of SUMO interaction motifs (SIMs) (By similarity).</text>
</comment>
<comment type="catalytic activity">
    <reaction evidence="1">
        <text>S-ubiquitinyl-[E2 ubiquitin-conjugating enzyme]-L-cysteine + [acceptor protein]-L-lysine = [E2 ubiquitin-conjugating enzyme]-L-cysteine + N(6)-ubiquitinyl-[acceptor protein]-L-lysine.</text>
        <dbReference type="EC" id="2.3.2.27"/>
    </reaction>
</comment>
<comment type="activity regulation">
    <text evidence="2">Binds free ubiquitin non-covalently via its RING-type zinc finger. Ubiquitin-binding leads to enhance the E3 ubiquitin-protein ligase activity by stabilizing the ubiquitin-conjugating enzyme E2 (donor ubiquitin) in the 'closed' conformation and activating ubiquitin transfer.</text>
</comment>
<comment type="pathway">
    <text evidence="1">Protein modification; protein ubiquitination.</text>
</comment>
<comment type="subunit">
    <text evidence="1 3">Monomer.</text>
</comment>
<comment type="subcellular location">
    <subcellularLocation>
        <location evidence="1">Nucleus</location>
    </subcellularLocation>
    <subcellularLocation>
        <location evidence="1">Cytoplasm</location>
    </subcellularLocation>
    <subcellularLocation>
        <location evidence="3">Nucleus</location>
        <location evidence="3">PML body</location>
    </subcellularLocation>
    <text evidence="1">Upon TGF-beta treatment, translocates from nucleus to cytosol.</text>
</comment>
<comment type="domain">
    <text evidence="1">The SUMO interaction motifs (SIMs) mediates the binding to polysumoylated substrate.</text>
</comment>
<comment type="domain">
    <text evidence="1 2">The RING-type zinc finger mediates the E3 ubiquitin-protein ligase activity and binds directly to free ubiquitin (By similarity). Non-covalent ubiquitin-binding stabilizes the ubiquitin-conjugating enzyme E2 (donor ubiquitin) in the 'closed' conformation and stimulates ubiquitin transfer (By similarity).</text>
</comment>
<comment type="similarity">
    <text evidence="6">Belongs to the Arkadia family.</text>
</comment>
<accession>Q0V9R0</accession>
<reference key="1">
    <citation type="submission" date="2006-08" db="EMBL/GenBank/DDBJ databases">
        <authorList>
            <consortium name="NIH - Xenopus Gene Collection (XGC) project"/>
        </authorList>
    </citation>
    <scope>NUCLEOTIDE SEQUENCE [LARGE SCALE MRNA]</scope>
    <source>
        <tissue>Testis</tissue>
    </source>
</reference>
<name>RN111_XENTR</name>
<feature type="chain" id="PRO_0000280696" description="E3 ubiquitin-protein ligase arkadia">
    <location>
        <begin position="1"/>
        <end position="954"/>
    </location>
</feature>
<feature type="zinc finger region" description="RING-type; atypical" evidence="4">
    <location>
        <begin position="902"/>
        <end position="943"/>
    </location>
</feature>
<feature type="region of interest" description="Disordered" evidence="5">
    <location>
        <begin position="50"/>
        <end position="175"/>
    </location>
</feature>
<feature type="region of interest" description="Disordered" evidence="5">
    <location>
        <begin position="193"/>
        <end position="276"/>
    </location>
</feature>
<feature type="region of interest" description="Disordered" evidence="5">
    <location>
        <begin position="318"/>
        <end position="346"/>
    </location>
</feature>
<feature type="region of interest" description="Disordered" evidence="5">
    <location>
        <begin position="364"/>
        <end position="452"/>
    </location>
</feature>
<feature type="region of interest" description="Disordered" evidence="5">
    <location>
        <begin position="485"/>
        <end position="509"/>
    </location>
</feature>
<feature type="region of interest" description="Ubiquitin binding" evidence="2">
    <location>
        <begin position="867"/>
        <end position="869"/>
    </location>
</feature>
<feature type="region of interest" description="Ubiquitin binding" evidence="2">
    <location>
        <begin position="917"/>
        <end position="921"/>
    </location>
</feature>
<feature type="short sequence motif" description="SUMO interaction motif 1 (SIM)" evidence="1">
    <location>
        <begin position="280"/>
        <end position="284"/>
    </location>
</feature>
<feature type="short sequence motif" description="SUMO interaction motif 2 (SIM)" evidence="1">
    <location>
        <begin position="305"/>
        <end position="311"/>
    </location>
</feature>
<feature type="short sequence motif" description="SUMO interaction motif 3 (SIM)" evidence="1">
    <location>
        <begin position="360"/>
        <end position="364"/>
    </location>
</feature>
<feature type="compositionally biased region" description="Polar residues" evidence="5">
    <location>
        <begin position="50"/>
        <end position="66"/>
    </location>
</feature>
<feature type="compositionally biased region" description="Low complexity" evidence="5">
    <location>
        <begin position="112"/>
        <end position="131"/>
    </location>
</feature>
<feature type="compositionally biased region" description="Low complexity" evidence="5">
    <location>
        <begin position="232"/>
        <end position="251"/>
    </location>
</feature>
<feature type="compositionally biased region" description="Polar residues" evidence="5">
    <location>
        <begin position="328"/>
        <end position="337"/>
    </location>
</feature>
<feature type="compositionally biased region" description="Low complexity" evidence="5">
    <location>
        <begin position="385"/>
        <end position="395"/>
    </location>
</feature>
<feature type="compositionally biased region" description="Basic residues" evidence="5">
    <location>
        <begin position="485"/>
        <end position="496"/>
    </location>
</feature>
<feature type="binding site" evidence="2">
    <location>
        <position position="902"/>
    </location>
    <ligand>
        <name>Zn(2+)</name>
        <dbReference type="ChEBI" id="CHEBI:29105"/>
    </ligand>
</feature>
<feature type="binding site" evidence="2">
    <location>
        <position position="905"/>
    </location>
    <ligand>
        <name>Zn(2+)</name>
        <dbReference type="ChEBI" id="CHEBI:29105"/>
    </ligand>
</feature>
<feature type="binding site" evidence="2">
    <location>
        <position position="925"/>
    </location>
    <ligand>
        <name>Zn(2+)</name>
        <dbReference type="ChEBI" id="CHEBI:29105"/>
    </ligand>
</feature>
<feature type="binding site" evidence="2">
    <location>
        <position position="928"/>
    </location>
    <ligand>
        <name>Zn(2+)</name>
        <dbReference type="ChEBI" id="CHEBI:29105"/>
    </ligand>
</feature>
<dbReference type="EC" id="2.3.2.27"/>
<dbReference type="EMBL" id="BC121428">
    <property type="protein sequence ID" value="AAI21429.1"/>
    <property type="molecule type" value="mRNA"/>
</dbReference>
<dbReference type="RefSeq" id="NP_001072805.1">
    <property type="nucleotide sequence ID" value="NM_001079337.1"/>
</dbReference>
<dbReference type="RefSeq" id="XP_012826020.2">
    <property type="nucleotide sequence ID" value="XM_012970566.3"/>
</dbReference>
<dbReference type="RefSeq" id="XP_012826021.2">
    <property type="nucleotide sequence ID" value="XM_012970567.3"/>
</dbReference>
<dbReference type="RefSeq" id="XP_012826022.2">
    <property type="nucleotide sequence ID" value="XM_012970568.2"/>
</dbReference>
<dbReference type="SMR" id="Q0V9R0"/>
<dbReference type="FunCoup" id="Q0V9R0">
    <property type="interactions" value="4659"/>
</dbReference>
<dbReference type="STRING" id="8364.ENSXETP00000029358"/>
<dbReference type="PaxDb" id="8364-ENSXETP00000023715"/>
<dbReference type="GeneID" id="780266"/>
<dbReference type="KEGG" id="xtr:780266"/>
<dbReference type="AGR" id="Xenbase:XB-GENE-854131"/>
<dbReference type="CTD" id="54778"/>
<dbReference type="Xenbase" id="XB-GENE-854131">
    <property type="gene designation" value="rnf111"/>
</dbReference>
<dbReference type="eggNOG" id="KOG0800">
    <property type="taxonomic scope" value="Eukaryota"/>
</dbReference>
<dbReference type="InParanoid" id="Q0V9R0"/>
<dbReference type="OMA" id="HTNRPQE"/>
<dbReference type="OrthoDB" id="8062037at2759"/>
<dbReference type="Reactome" id="R-XTR-983168">
    <property type="pathway name" value="Antigen processing: Ubiquitination &amp; Proteasome degradation"/>
</dbReference>
<dbReference type="UniPathway" id="UPA00143"/>
<dbReference type="Proteomes" id="UP000008143">
    <property type="component" value="Chromosome 3"/>
</dbReference>
<dbReference type="Bgee" id="ENSXETG00000010842">
    <property type="expression patterns" value="Expressed in blastula and 12 other cell types or tissues"/>
</dbReference>
<dbReference type="GO" id="GO:0005737">
    <property type="term" value="C:cytoplasm"/>
    <property type="evidence" value="ECO:0007669"/>
    <property type="project" value="UniProtKB-SubCell"/>
</dbReference>
<dbReference type="GO" id="GO:0016605">
    <property type="term" value="C:PML body"/>
    <property type="evidence" value="ECO:0007669"/>
    <property type="project" value="UniProtKB-SubCell"/>
</dbReference>
<dbReference type="GO" id="GO:0016740">
    <property type="term" value="F:transferase activity"/>
    <property type="evidence" value="ECO:0007669"/>
    <property type="project" value="UniProtKB-KW"/>
</dbReference>
<dbReference type="GO" id="GO:0008270">
    <property type="term" value="F:zinc ion binding"/>
    <property type="evidence" value="ECO:0007669"/>
    <property type="project" value="UniProtKB-KW"/>
</dbReference>
<dbReference type="GO" id="GO:0006281">
    <property type="term" value="P:DNA repair"/>
    <property type="evidence" value="ECO:0007669"/>
    <property type="project" value="UniProtKB-KW"/>
</dbReference>
<dbReference type="GO" id="GO:0055113">
    <property type="term" value="P:epiboly involved in gastrulation with mouth forming second"/>
    <property type="evidence" value="ECO:0007669"/>
    <property type="project" value="Ensembl"/>
</dbReference>
<dbReference type="GO" id="GO:0021501">
    <property type="term" value="P:prechordal plate formation"/>
    <property type="evidence" value="ECO:0007669"/>
    <property type="project" value="Ensembl"/>
</dbReference>
<dbReference type="GO" id="GO:0016567">
    <property type="term" value="P:protein ubiquitination"/>
    <property type="evidence" value="ECO:0007669"/>
    <property type="project" value="UniProtKB-UniPathway"/>
</dbReference>
<dbReference type="CDD" id="cd16681">
    <property type="entry name" value="RING-H2_RNF111"/>
    <property type="match status" value="1"/>
</dbReference>
<dbReference type="FunFam" id="3.30.40.10:FF:000165">
    <property type="entry name" value="E3 ubiquitin-protein ligase Arkadia isoform X1"/>
    <property type="match status" value="1"/>
</dbReference>
<dbReference type="Gene3D" id="3.30.40.10">
    <property type="entry name" value="Zinc/RING finger domain, C3HC4 (zinc finger)"/>
    <property type="match status" value="1"/>
</dbReference>
<dbReference type="InterPro" id="IPR029306">
    <property type="entry name" value="RNF111_N"/>
</dbReference>
<dbReference type="InterPro" id="IPR001841">
    <property type="entry name" value="Znf_RING"/>
</dbReference>
<dbReference type="InterPro" id="IPR013083">
    <property type="entry name" value="Znf_RING/FYVE/PHD"/>
</dbReference>
<dbReference type="InterPro" id="IPR051073">
    <property type="entry name" value="ZNRF3_Arkadia_E3_ligases"/>
</dbReference>
<dbReference type="PANTHER" id="PTHR16200">
    <property type="entry name" value="RING ZINC FINGER"/>
    <property type="match status" value="1"/>
</dbReference>
<dbReference type="Pfam" id="PF15303">
    <property type="entry name" value="RNF111_N"/>
    <property type="match status" value="1"/>
</dbReference>
<dbReference type="Pfam" id="PF13639">
    <property type="entry name" value="zf-RING_2"/>
    <property type="match status" value="1"/>
</dbReference>
<dbReference type="SMART" id="SM00184">
    <property type="entry name" value="RING"/>
    <property type="match status" value="1"/>
</dbReference>
<dbReference type="SUPFAM" id="SSF57850">
    <property type="entry name" value="RING/U-box"/>
    <property type="match status" value="1"/>
</dbReference>
<dbReference type="PROSITE" id="PS50089">
    <property type="entry name" value="ZF_RING_2"/>
    <property type="match status" value="1"/>
</dbReference>
<organism>
    <name type="scientific">Xenopus tropicalis</name>
    <name type="common">Western clawed frog</name>
    <name type="synonym">Silurana tropicalis</name>
    <dbReference type="NCBI Taxonomy" id="8364"/>
    <lineage>
        <taxon>Eukaryota</taxon>
        <taxon>Metazoa</taxon>
        <taxon>Chordata</taxon>
        <taxon>Craniata</taxon>
        <taxon>Vertebrata</taxon>
        <taxon>Euteleostomi</taxon>
        <taxon>Amphibia</taxon>
        <taxon>Batrachia</taxon>
        <taxon>Anura</taxon>
        <taxon>Pipoidea</taxon>
        <taxon>Pipidae</taxon>
        <taxon>Xenopodinae</taxon>
        <taxon>Xenopus</taxon>
        <taxon>Silurana</taxon>
    </lineage>
</organism>
<keyword id="KW-0963">Cytoplasm</keyword>
<keyword id="KW-0217">Developmental protein</keyword>
<keyword id="KW-0227">DNA damage</keyword>
<keyword id="KW-0234">DNA repair</keyword>
<keyword id="KW-1017">Isopeptide bond</keyword>
<keyword id="KW-0479">Metal-binding</keyword>
<keyword id="KW-0539">Nucleus</keyword>
<keyword id="KW-1185">Reference proteome</keyword>
<keyword id="KW-0808">Transferase</keyword>
<keyword id="KW-0833">Ubl conjugation pathway</keyword>
<keyword id="KW-0862">Zinc</keyword>
<keyword id="KW-0863">Zinc-finger</keyword>
<sequence>MKSEVSSDAPKRQENLKGVLLNPEAIGASKSFPKEVEMIASKVSNEFSHLCSDTNKQQRDLNSNGTEQEKNLVVHKKRKNQQAGTSYAQSCEVKENQRLLRLQPQSDEDNDSSFSDCISSPSSSSHFGDSDTMTSDEDKDNPRRYSPAGVNATPRTQSARAQKWPRPHTDSVSSLVMKRPCYQVSSLRRPLHRKRFVKNVSSQRTQKQKERMMLQRKKREVLARQKYALLPSSSSSSENDLSSESSSSSSTEGEEDLFVSPGENHQDGTTLPSGGMDEDVVVIEASSTPQVTANEEINVTSTDSEVEIVTVGETYRSRTTLGHPRSHWGQNTQSGRTQEQRTRNRVSTVIQPLRQNTTEVVDLTVDEDDPTVVPTTSGRVESQPVSTVSSNTSTSEPASDSASGPLGSRGSAIPEIPPIPPNSNTVGTIADDSRTSTSGTNVDGGPPAMPRLPSCCPQHSPCGGSSQNHVLGHPHSSCFPPHSHHFPHHHHHHHQSSHPGVPLSPSFRDSHCPVERNAAVPPPCGATSSSGSTYHDPQALPVDLSNNGIRSHGSVSFHSTSAFDPCCPGSSSRSTVYGHQSTTSTAQTMAIDGYGSSMVAQAQPPPPTPLSSCRHYMHAPYTSLTRPLHHQTSSCPHSHSNVGDYVIAHQVPFISPLPSLAATHAVPPPPPSHHLSTAAAPQHLSTSHQSMSHHISATAPATQRLHTHEVIQRMEVQRRRMMQHPTRAHERPPPHPHRMHPNYGHGHHIHVPQTMSSHPRQGPERSAWEIAIETGVTAAPYQTGPLHTHLAHYHAPPRLHHLQIGALPLMVPDMAGYPHIRYISSGLDGRSFRVPFRGNFEELIHLEERLGNVNRGASQGTIERCTYPHKYEKVSTDWFSQRKLHSKQDGEEATEEDTEEKCTICLSILEEGEDVRRLPCMHLFHQVCVDQWLITNKKCPICRVDIDTQLPTES</sequence>
<protein>
    <recommendedName>
        <fullName>E3 ubiquitin-protein ligase arkadia</fullName>
        <ecNumber>2.3.2.27</ecNumber>
    </recommendedName>
    <alternativeName>
        <fullName>RING finger protein 111</fullName>
    </alternativeName>
    <alternativeName>
        <fullName evidence="6">RING-type E3 ubiquitin transferase arkadia</fullName>
    </alternativeName>
</protein>
<gene>
    <name type="primary">rnf111</name>
</gene>